<evidence type="ECO:0000255" key="1">
    <source>
        <dbReference type="HAMAP-Rule" id="MF_00294"/>
    </source>
</evidence>
<evidence type="ECO:0000305" key="2"/>
<accession>B0UUW9</accession>
<proteinExistence type="inferred from homology"/>
<keyword id="KW-0687">Ribonucleoprotein</keyword>
<keyword id="KW-0689">Ribosomal protein</keyword>
<feature type="chain" id="PRO_1000078913" description="Large ribosomal subunit protein bL33">
    <location>
        <begin position="1"/>
        <end position="56"/>
    </location>
</feature>
<name>RL33_HISS2</name>
<comment type="similarity">
    <text evidence="1">Belongs to the bacterial ribosomal protein bL33 family.</text>
</comment>
<organism>
    <name type="scientific">Histophilus somni (strain 2336)</name>
    <name type="common">Haemophilus somnus</name>
    <dbReference type="NCBI Taxonomy" id="228400"/>
    <lineage>
        <taxon>Bacteria</taxon>
        <taxon>Pseudomonadati</taxon>
        <taxon>Pseudomonadota</taxon>
        <taxon>Gammaproteobacteria</taxon>
        <taxon>Pasteurellales</taxon>
        <taxon>Pasteurellaceae</taxon>
        <taxon>Histophilus</taxon>
    </lineage>
</organism>
<gene>
    <name evidence="1" type="primary">rpmG</name>
    <name type="ordered locus">HSM_0011</name>
</gene>
<dbReference type="EMBL" id="CP000947">
    <property type="protein sequence ID" value="ACA30817.1"/>
    <property type="molecule type" value="Genomic_DNA"/>
</dbReference>
<dbReference type="RefSeq" id="WP_005542835.1">
    <property type="nucleotide sequence ID" value="NC_010519.1"/>
</dbReference>
<dbReference type="SMR" id="B0UUW9"/>
<dbReference type="STRING" id="228400.HSM_0011"/>
<dbReference type="GeneID" id="77264156"/>
<dbReference type="KEGG" id="hsm:HSM_0011"/>
<dbReference type="HOGENOM" id="CLU_190949_1_1_6"/>
<dbReference type="GO" id="GO:0022625">
    <property type="term" value="C:cytosolic large ribosomal subunit"/>
    <property type="evidence" value="ECO:0007669"/>
    <property type="project" value="TreeGrafter"/>
</dbReference>
<dbReference type="GO" id="GO:0003735">
    <property type="term" value="F:structural constituent of ribosome"/>
    <property type="evidence" value="ECO:0007669"/>
    <property type="project" value="InterPro"/>
</dbReference>
<dbReference type="GO" id="GO:0006412">
    <property type="term" value="P:translation"/>
    <property type="evidence" value="ECO:0007669"/>
    <property type="project" value="UniProtKB-UniRule"/>
</dbReference>
<dbReference type="FunFam" id="2.20.28.120:FF:000001">
    <property type="entry name" value="50S ribosomal protein L33"/>
    <property type="match status" value="1"/>
</dbReference>
<dbReference type="Gene3D" id="2.20.28.120">
    <property type="entry name" value="Ribosomal protein L33"/>
    <property type="match status" value="1"/>
</dbReference>
<dbReference type="HAMAP" id="MF_00294">
    <property type="entry name" value="Ribosomal_bL33"/>
    <property type="match status" value="1"/>
</dbReference>
<dbReference type="InterPro" id="IPR001705">
    <property type="entry name" value="Ribosomal_bL33"/>
</dbReference>
<dbReference type="InterPro" id="IPR018264">
    <property type="entry name" value="Ribosomal_bL33_CS"/>
</dbReference>
<dbReference type="InterPro" id="IPR038584">
    <property type="entry name" value="Ribosomal_bL33_sf"/>
</dbReference>
<dbReference type="InterPro" id="IPR011332">
    <property type="entry name" value="Ribosomal_zn-bd"/>
</dbReference>
<dbReference type="NCBIfam" id="NF001860">
    <property type="entry name" value="PRK00595.1"/>
    <property type="match status" value="1"/>
</dbReference>
<dbReference type="NCBIfam" id="TIGR01023">
    <property type="entry name" value="rpmG_bact"/>
    <property type="match status" value="1"/>
</dbReference>
<dbReference type="PANTHER" id="PTHR15238">
    <property type="entry name" value="54S RIBOSOMAL PROTEIN L39, MITOCHONDRIAL"/>
    <property type="match status" value="1"/>
</dbReference>
<dbReference type="PANTHER" id="PTHR15238:SF1">
    <property type="entry name" value="LARGE RIBOSOMAL SUBUNIT PROTEIN BL33M"/>
    <property type="match status" value="1"/>
</dbReference>
<dbReference type="Pfam" id="PF00471">
    <property type="entry name" value="Ribosomal_L33"/>
    <property type="match status" value="1"/>
</dbReference>
<dbReference type="SUPFAM" id="SSF57829">
    <property type="entry name" value="Zn-binding ribosomal proteins"/>
    <property type="match status" value="1"/>
</dbReference>
<dbReference type="PROSITE" id="PS00582">
    <property type="entry name" value="RIBOSOMAL_L33"/>
    <property type="match status" value="1"/>
</dbReference>
<sequence length="56" mass="6549">MAAKGAREKIRLVSTAETGHFYTTTKNKRNMPEKMEIKKFDPVVRKHVIYKEAKIK</sequence>
<reference key="1">
    <citation type="submission" date="2008-02" db="EMBL/GenBank/DDBJ databases">
        <title>Complete sequence of Haemophilus somnus 2336.</title>
        <authorList>
            <consortium name="US DOE Joint Genome Institute"/>
            <person name="Siddaramappa S."/>
            <person name="Duncan A.J."/>
            <person name="Challacombe J.F."/>
            <person name="Rainey D."/>
            <person name="Gillaspy A.F."/>
            <person name="Carson M."/>
            <person name="Gipson J."/>
            <person name="Gipson M."/>
            <person name="Bruce D."/>
            <person name="Detter J.C."/>
            <person name="Han C.S."/>
            <person name="Land M."/>
            <person name="Tapia R."/>
            <person name="Thompson L.S."/>
            <person name="Orvis J."/>
            <person name="Zaitshik J."/>
            <person name="Barnes G."/>
            <person name="Brettin T.S."/>
            <person name="Dyer D.W."/>
            <person name="Inzana T.J."/>
        </authorList>
    </citation>
    <scope>NUCLEOTIDE SEQUENCE [LARGE SCALE GENOMIC DNA]</scope>
    <source>
        <strain>2336</strain>
    </source>
</reference>
<protein>
    <recommendedName>
        <fullName evidence="1">Large ribosomal subunit protein bL33</fullName>
    </recommendedName>
    <alternativeName>
        <fullName evidence="2">50S ribosomal protein L33</fullName>
    </alternativeName>
</protein>